<evidence type="ECO:0000255" key="1">
    <source>
        <dbReference type="HAMAP-Rule" id="MF_00163"/>
    </source>
</evidence>
<feature type="chain" id="PRO_1000076948" description="Peptide deformylase">
    <location>
        <begin position="1"/>
        <end position="155"/>
    </location>
</feature>
<feature type="active site" evidence="1">
    <location>
        <position position="131"/>
    </location>
</feature>
<feature type="binding site" evidence="1">
    <location>
        <position position="88"/>
    </location>
    <ligand>
        <name>Fe cation</name>
        <dbReference type="ChEBI" id="CHEBI:24875"/>
    </ligand>
</feature>
<feature type="binding site" evidence="1">
    <location>
        <position position="130"/>
    </location>
    <ligand>
        <name>Fe cation</name>
        <dbReference type="ChEBI" id="CHEBI:24875"/>
    </ligand>
</feature>
<feature type="binding site" evidence="1">
    <location>
        <position position="134"/>
    </location>
    <ligand>
        <name>Fe cation</name>
        <dbReference type="ChEBI" id="CHEBI:24875"/>
    </ligand>
</feature>
<reference key="1">
    <citation type="journal article" date="2008" name="Genome Res.">
        <title>The genome of Pelotomaculum thermopropionicum reveals niche-associated evolution in anaerobic microbiota.</title>
        <authorList>
            <person name="Kosaka T."/>
            <person name="Kato S."/>
            <person name="Shimoyama T."/>
            <person name="Ishii S."/>
            <person name="Abe T."/>
            <person name="Watanabe K."/>
        </authorList>
    </citation>
    <scope>NUCLEOTIDE SEQUENCE [LARGE SCALE GENOMIC DNA]</scope>
    <source>
        <strain>DSM 13744 / JCM 10971 / SI</strain>
    </source>
</reference>
<protein>
    <recommendedName>
        <fullName evidence="1">Peptide deformylase</fullName>
        <shortName evidence="1">PDF</shortName>
        <ecNumber evidence="1">3.5.1.88</ecNumber>
    </recommendedName>
    <alternativeName>
        <fullName evidence="1">Polypeptide deformylase</fullName>
    </alternativeName>
</protein>
<keyword id="KW-0378">Hydrolase</keyword>
<keyword id="KW-0408">Iron</keyword>
<keyword id="KW-0479">Metal-binding</keyword>
<keyword id="KW-0648">Protein biosynthesis</keyword>
<keyword id="KW-1185">Reference proteome</keyword>
<sequence length="155" mass="16972">MAVYKIVELGDRILKERAKEVPKINQNIIKLLDNMAETMYHARGVGLAAPQIGVSKRVIVVDVGEGLLEMINPVITSCAGHETDSEGCLSIPGIVGDVTRASVIEVKGLDRRGKPLEVKAKGYLARALQHEIDHLDGILFIEKAKNIRKLVPKED</sequence>
<proteinExistence type="inferred from homology"/>
<organism>
    <name type="scientific">Pelotomaculum thermopropionicum (strain DSM 13744 / JCM 10971 / SI)</name>
    <dbReference type="NCBI Taxonomy" id="370438"/>
    <lineage>
        <taxon>Bacteria</taxon>
        <taxon>Bacillati</taxon>
        <taxon>Bacillota</taxon>
        <taxon>Clostridia</taxon>
        <taxon>Eubacteriales</taxon>
        <taxon>Desulfotomaculaceae</taxon>
        <taxon>Pelotomaculum</taxon>
    </lineage>
</organism>
<dbReference type="EC" id="3.5.1.88" evidence="1"/>
<dbReference type="EMBL" id="AP009389">
    <property type="protein sequence ID" value="BAF59972.1"/>
    <property type="molecule type" value="Genomic_DNA"/>
</dbReference>
<dbReference type="SMR" id="A5D1C0"/>
<dbReference type="STRING" id="370438.PTH_1791"/>
<dbReference type="KEGG" id="pth:PTH_1791"/>
<dbReference type="eggNOG" id="COG0242">
    <property type="taxonomic scope" value="Bacteria"/>
</dbReference>
<dbReference type="HOGENOM" id="CLU_061901_4_2_9"/>
<dbReference type="Proteomes" id="UP000006556">
    <property type="component" value="Chromosome"/>
</dbReference>
<dbReference type="GO" id="GO:0046872">
    <property type="term" value="F:metal ion binding"/>
    <property type="evidence" value="ECO:0007669"/>
    <property type="project" value="UniProtKB-KW"/>
</dbReference>
<dbReference type="GO" id="GO:0042586">
    <property type="term" value="F:peptide deformylase activity"/>
    <property type="evidence" value="ECO:0007669"/>
    <property type="project" value="UniProtKB-UniRule"/>
</dbReference>
<dbReference type="GO" id="GO:0043686">
    <property type="term" value="P:co-translational protein modification"/>
    <property type="evidence" value="ECO:0007669"/>
    <property type="project" value="TreeGrafter"/>
</dbReference>
<dbReference type="GO" id="GO:0006412">
    <property type="term" value="P:translation"/>
    <property type="evidence" value="ECO:0007669"/>
    <property type="project" value="UniProtKB-UniRule"/>
</dbReference>
<dbReference type="CDD" id="cd00487">
    <property type="entry name" value="Pep_deformylase"/>
    <property type="match status" value="1"/>
</dbReference>
<dbReference type="Gene3D" id="3.90.45.10">
    <property type="entry name" value="Peptide deformylase"/>
    <property type="match status" value="1"/>
</dbReference>
<dbReference type="HAMAP" id="MF_00163">
    <property type="entry name" value="Pep_deformylase"/>
    <property type="match status" value="1"/>
</dbReference>
<dbReference type="InterPro" id="IPR023635">
    <property type="entry name" value="Peptide_deformylase"/>
</dbReference>
<dbReference type="InterPro" id="IPR036821">
    <property type="entry name" value="Peptide_deformylase_sf"/>
</dbReference>
<dbReference type="NCBIfam" id="TIGR00079">
    <property type="entry name" value="pept_deformyl"/>
    <property type="match status" value="1"/>
</dbReference>
<dbReference type="NCBIfam" id="NF001159">
    <property type="entry name" value="PRK00150.1-3"/>
    <property type="match status" value="1"/>
</dbReference>
<dbReference type="PANTHER" id="PTHR10458">
    <property type="entry name" value="PEPTIDE DEFORMYLASE"/>
    <property type="match status" value="1"/>
</dbReference>
<dbReference type="PANTHER" id="PTHR10458:SF22">
    <property type="entry name" value="PEPTIDE DEFORMYLASE"/>
    <property type="match status" value="1"/>
</dbReference>
<dbReference type="Pfam" id="PF01327">
    <property type="entry name" value="Pep_deformylase"/>
    <property type="match status" value="1"/>
</dbReference>
<dbReference type="PIRSF" id="PIRSF004749">
    <property type="entry name" value="Pep_def"/>
    <property type="match status" value="1"/>
</dbReference>
<dbReference type="PRINTS" id="PR01576">
    <property type="entry name" value="PDEFORMYLASE"/>
</dbReference>
<dbReference type="SUPFAM" id="SSF56420">
    <property type="entry name" value="Peptide deformylase"/>
    <property type="match status" value="1"/>
</dbReference>
<name>DEF_PELTS</name>
<comment type="function">
    <text evidence="1">Removes the formyl group from the N-terminal Met of newly synthesized proteins. Requires at least a dipeptide for an efficient rate of reaction. N-terminal L-methionine is a prerequisite for activity but the enzyme has broad specificity at other positions.</text>
</comment>
<comment type="catalytic activity">
    <reaction evidence="1">
        <text>N-terminal N-formyl-L-methionyl-[peptide] + H2O = N-terminal L-methionyl-[peptide] + formate</text>
        <dbReference type="Rhea" id="RHEA:24420"/>
        <dbReference type="Rhea" id="RHEA-COMP:10639"/>
        <dbReference type="Rhea" id="RHEA-COMP:10640"/>
        <dbReference type="ChEBI" id="CHEBI:15377"/>
        <dbReference type="ChEBI" id="CHEBI:15740"/>
        <dbReference type="ChEBI" id="CHEBI:49298"/>
        <dbReference type="ChEBI" id="CHEBI:64731"/>
        <dbReference type="EC" id="3.5.1.88"/>
    </reaction>
</comment>
<comment type="cofactor">
    <cofactor evidence="1">
        <name>Fe(2+)</name>
        <dbReference type="ChEBI" id="CHEBI:29033"/>
    </cofactor>
    <text evidence="1">Binds 1 Fe(2+) ion.</text>
</comment>
<comment type="similarity">
    <text evidence="1">Belongs to the polypeptide deformylase family.</text>
</comment>
<accession>A5D1C0</accession>
<gene>
    <name evidence="1" type="primary">def</name>
    <name type="ordered locus">PTH_1791</name>
</gene>